<reference key="1">
    <citation type="journal article" date="2011" name="Appl. Environ. Microbiol.">
        <title>Genomic potential of Marinobacter aquaeolei, a biogeochemical 'opportunitroph'.</title>
        <authorList>
            <person name="Singer E."/>
            <person name="Webb E.A."/>
            <person name="Nelson W.C."/>
            <person name="Heidelberg J.F."/>
            <person name="Ivanova N."/>
            <person name="Pati A."/>
            <person name="Edwards K.J."/>
        </authorList>
    </citation>
    <scope>NUCLEOTIDE SEQUENCE [LARGE SCALE GENOMIC DNA]</scope>
    <source>
        <strain>ATCC 700491 / DSM 11845 / VT8</strain>
    </source>
</reference>
<keyword id="KW-0414">Isoprene biosynthesis</keyword>
<keyword id="KW-0456">Lyase</keyword>
<keyword id="KW-0479">Metal-binding</keyword>
<protein>
    <recommendedName>
        <fullName evidence="1">2-C-methyl-D-erythritol 2,4-cyclodiphosphate synthase</fullName>
        <shortName evidence="1">MECDP-synthase</shortName>
        <shortName evidence="1">MECPP-synthase</shortName>
        <shortName evidence="1">MECPS</shortName>
        <ecNumber evidence="1">4.6.1.12</ecNumber>
    </recommendedName>
</protein>
<comment type="function">
    <text evidence="1">Involved in the biosynthesis of isopentenyl diphosphate (IPP) and dimethylallyl diphosphate (DMAPP), two major building blocks of isoprenoid compounds. Catalyzes the conversion of 4-diphosphocytidyl-2-C-methyl-D-erythritol 2-phosphate (CDP-ME2P) to 2-C-methyl-D-erythritol 2,4-cyclodiphosphate (ME-CPP) with a corresponding release of cytidine 5-monophosphate (CMP).</text>
</comment>
<comment type="catalytic activity">
    <reaction evidence="1">
        <text>4-CDP-2-C-methyl-D-erythritol 2-phosphate = 2-C-methyl-D-erythritol 2,4-cyclic diphosphate + CMP</text>
        <dbReference type="Rhea" id="RHEA:23864"/>
        <dbReference type="ChEBI" id="CHEBI:57919"/>
        <dbReference type="ChEBI" id="CHEBI:58483"/>
        <dbReference type="ChEBI" id="CHEBI:60377"/>
        <dbReference type="EC" id="4.6.1.12"/>
    </reaction>
</comment>
<comment type="cofactor">
    <cofactor evidence="1">
        <name>a divalent metal cation</name>
        <dbReference type="ChEBI" id="CHEBI:60240"/>
    </cofactor>
    <text evidence="1">Binds 1 divalent metal cation per subunit.</text>
</comment>
<comment type="pathway">
    <text evidence="1">Isoprenoid biosynthesis; isopentenyl diphosphate biosynthesis via DXP pathway; isopentenyl diphosphate from 1-deoxy-D-xylulose 5-phosphate: step 4/6.</text>
</comment>
<comment type="subunit">
    <text evidence="1">Homotrimer.</text>
</comment>
<comment type="similarity">
    <text evidence="1">Belongs to the IspF family.</text>
</comment>
<evidence type="ECO:0000255" key="1">
    <source>
        <dbReference type="HAMAP-Rule" id="MF_00107"/>
    </source>
</evidence>
<feature type="chain" id="PRO_1000022850" description="2-C-methyl-D-erythritol 2,4-cyclodiphosphate synthase">
    <location>
        <begin position="1"/>
        <end position="159"/>
    </location>
</feature>
<feature type="binding site" evidence="1">
    <location>
        <begin position="8"/>
        <end position="10"/>
    </location>
    <ligand>
        <name>4-CDP-2-C-methyl-D-erythritol 2-phosphate</name>
        <dbReference type="ChEBI" id="CHEBI:57919"/>
    </ligand>
</feature>
<feature type="binding site" evidence="1">
    <location>
        <position position="8"/>
    </location>
    <ligand>
        <name>a divalent metal cation</name>
        <dbReference type="ChEBI" id="CHEBI:60240"/>
    </ligand>
</feature>
<feature type="binding site" evidence="1">
    <location>
        <position position="10"/>
    </location>
    <ligand>
        <name>a divalent metal cation</name>
        <dbReference type="ChEBI" id="CHEBI:60240"/>
    </ligand>
</feature>
<feature type="binding site" evidence="1">
    <location>
        <begin position="34"/>
        <end position="35"/>
    </location>
    <ligand>
        <name>4-CDP-2-C-methyl-D-erythritol 2-phosphate</name>
        <dbReference type="ChEBI" id="CHEBI:57919"/>
    </ligand>
</feature>
<feature type="binding site" evidence="1">
    <location>
        <position position="42"/>
    </location>
    <ligand>
        <name>a divalent metal cation</name>
        <dbReference type="ChEBI" id="CHEBI:60240"/>
    </ligand>
</feature>
<feature type="binding site" evidence="1">
    <location>
        <begin position="56"/>
        <end position="58"/>
    </location>
    <ligand>
        <name>4-CDP-2-C-methyl-D-erythritol 2-phosphate</name>
        <dbReference type="ChEBI" id="CHEBI:57919"/>
    </ligand>
</feature>
<feature type="binding site" evidence="1">
    <location>
        <begin position="100"/>
        <end position="106"/>
    </location>
    <ligand>
        <name>4-CDP-2-C-methyl-D-erythritol 2-phosphate</name>
        <dbReference type="ChEBI" id="CHEBI:57919"/>
    </ligand>
</feature>
<feature type="binding site" evidence="1">
    <location>
        <begin position="132"/>
        <end position="135"/>
    </location>
    <ligand>
        <name>4-CDP-2-C-methyl-D-erythritol 2-phosphate</name>
        <dbReference type="ChEBI" id="CHEBI:57919"/>
    </ligand>
</feature>
<feature type="binding site" evidence="1">
    <location>
        <position position="139"/>
    </location>
    <ligand>
        <name>4-CDP-2-C-methyl-D-erythritol 2-phosphate</name>
        <dbReference type="ChEBI" id="CHEBI:57919"/>
    </ligand>
</feature>
<feature type="binding site" evidence="1">
    <location>
        <position position="142"/>
    </location>
    <ligand>
        <name>4-CDP-2-C-methyl-D-erythritol 2-phosphate</name>
        <dbReference type="ChEBI" id="CHEBI:57919"/>
    </ligand>
</feature>
<feature type="site" description="Transition state stabilizer" evidence="1">
    <location>
        <position position="34"/>
    </location>
</feature>
<feature type="site" description="Transition state stabilizer" evidence="1">
    <location>
        <position position="133"/>
    </location>
</feature>
<sequence length="159" mass="16820">MRIGQGFDVHAFCEGDSVILGGVTIPHSHGLMAHSDGDVLLHALADALLGAVALGDIGHFFPDSSEEWAGADSRDLLRRVMQRVLDEGYAVTNIDTTIIAQAPKMAPHIEAMRMNIAEDLGVPANRVSVKATTTEKLGFTGRGEGIACQAVCLLEAVSQ</sequence>
<dbReference type="EC" id="4.6.1.12" evidence="1"/>
<dbReference type="EMBL" id="CP000514">
    <property type="protein sequence ID" value="ABM18020.1"/>
    <property type="molecule type" value="Genomic_DNA"/>
</dbReference>
<dbReference type="RefSeq" id="WP_011784440.1">
    <property type="nucleotide sequence ID" value="NC_008740.1"/>
</dbReference>
<dbReference type="SMR" id="A1TZ51"/>
<dbReference type="STRING" id="351348.Maqu_0924"/>
<dbReference type="GeneID" id="31821762"/>
<dbReference type="KEGG" id="maq:Maqu_0924"/>
<dbReference type="eggNOG" id="COG0245">
    <property type="taxonomic scope" value="Bacteria"/>
</dbReference>
<dbReference type="HOGENOM" id="CLU_084630_2_0_6"/>
<dbReference type="OrthoDB" id="9804336at2"/>
<dbReference type="UniPathway" id="UPA00056">
    <property type="reaction ID" value="UER00095"/>
</dbReference>
<dbReference type="Proteomes" id="UP000000998">
    <property type="component" value="Chromosome"/>
</dbReference>
<dbReference type="GO" id="GO:0008685">
    <property type="term" value="F:2-C-methyl-D-erythritol 2,4-cyclodiphosphate synthase activity"/>
    <property type="evidence" value="ECO:0007669"/>
    <property type="project" value="UniProtKB-UniRule"/>
</dbReference>
<dbReference type="GO" id="GO:0046872">
    <property type="term" value="F:metal ion binding"/>
    <property type="evidence" value="ECO:0007669"/>
    <property type="project" value="UniProtKB-KW"/>
</dbReference>
<dbReference type="GO" id="GO:0019288">
    <property type="term" value="P:isopentenyl diphosphate biosynthetic process, methylerythritol 4-phosphate pathway"/>
    <property type="evidence" value="ECO:0007669"/>
    <property type="project" value="UniProtKB-UniRule"/>
</dbReference>
<dbReference type="GO" id="GO:0016114">
    <property type="term" value="P:terpenoid biosynthetic process"/>
    <property type="evidence" value="ECO:0007669"/>
    <property type="project" value="InterPro"/>
</dbReference>
<dbReference type="CDD" id="cd00554">
    <property type="entry name" value="MECDP_synthase"/>
    <property type="match status" value="1"/>
</dbReference>
<dbReference type="FunFam" id="3.30.1330.50:FF:000001">
    <property type="entry name" value="2-C-methyl-D-erythritol 2,4-cyclodiphosphate synthase"/>
    <property type="match status" value="1"/>
</dbReference>
<dbReference type="Gene3D" id="3.30.1330.50">
    <property type="entry name" value="2-C-methyl-D-erythritol 2,4-cyclodiphosphate synthase"/>
    <property type="match status" value="1"/>
</dbReference>
<dbReference type="HAMAP" id="MF_00107">
    <property type="entry name" value="IspF"/>
    <property type="match status" value="1"/>
</dbReference>
<dbReference type="InterPro" id="IPR003526">
    <property type="entry name" value="MECDP_synthase"/>
</dbReference>
<dbReference type="InterPro" id="IPR020555">
    <property type="entry name" value="MECDP_synthase_CS"/>
</dbReference>
<dbReference type="InterPro" id="IPR036571">
    <property type="entry name" value="MECDP_synthase_sf"/>
</dbReference>
<dbReference type="NCBIfam" id="TIGR00151">
    <property type="entry name" value="ispF"/>
    <property type="match status" value="1"/>
</dbReference>
<dbReference type="PANTHER" id="PTHR43181">
    <property type="entry name" value="2-C-METHYL-D-ERYTHRITOL 2,4-CYCLODIPHOSPHATE SYNTHASE, CHLOROPLASTIC"/>
    <property type="match status" value="1"/>
</dbReference>
<dbReference type="PANTHER" id="PTHR43181:SF1">
    <property type="entry name" value="2-C-METHYL-D-ERYTHRITOL 2,4-CYCLODIPHOSPHATE SYNTHASE, CHLOROPLASTIC"/>
    <property type="match status" value="1"/>
</dbReference>
<dbReference type="Pfam" id="PF02542">
    <property type="entry name" value="YgbB"/>
    <property type="match status" value="1"/>
</dbReference>
<dbReference type="SUPFAM" id="SSF69765">
    <property type="entry name" value="IpsF-like"/>
    <property type="match status" value="1"/>
</dbReference>
<dbReference type="PROSITE" id="PS01350">
    <property type="entry name" value="ISPF"/>
    <property type="match status" value="1"/>
</dbReference>
<proteinExistence type="inferred from homology"/>
<name>ISPF_MARN8</name>
<organism>
    <name type="scientific">Marinobacter nauticus (strain ATCC 700491 / DSM 11845 / VT8)</name>
    <name type="common">Marinobacter aquaeolei</name>
    <dbReference type="NCBI Taxonomy" id="351348"/>
    <lineage>
        <taxon>Bacteria</taxon>
        <taxon>Pseudomonadati</taxon>
        <taxon>Pseudomonadota</taxon>
        <taxon>Gammaproteobacteria</taxon>
        <taxon>Pseudomonadales</taxon>
        <taxon>Marinobacteraceae</taxon>
        <taxon>Marinobacter</taxon>
    </lineage>
</organism>
<gene>
    <name evidence="1" type="primary">ispF</name>
    <name type="ordered locus">Maqu_0924</name>
</gene>
<accession>A1TZ51</accession>